<protein>
    <recommendedName>
        <fullName evidence="1">Photosystem II reaction center protein T</fullName>
        <shortName evidence="1">PSII-T</shortName>
    </recommendedName>
</protein>
<feature type="chain" id="PRO_0000276312" description="Photosystem II reaction center protein T">
    <location>
        <begin position="1"/>
        <end position="34"/>
    </location>
</feature>
<feature type="transmembrane region" description="Helical" evidence="1">
    <location>
        <begin position="3"/>
        <end position="23"/>
    </location>
</feature>
<reference key="1">
    <citation type="journal article" date="2006" name="Theor. Appl. Genet.">
        <title>Complete chloroplast genome sequences of Solanum bulbocastanum, Solanum lycopersicum and comparative analyses with other Solanaceae genomes.</title>
        <authorList>
            <person name="Daniell H."/>
            <person name="Lee S.-B."/>
            <person name="Grevich J."/>
            <person name="Saski C."/>
            <person name="Quesada-Vargas T."/>
            <person name="Guda C."/>
            <person name="Tomkins J."/>
            <person name="Jansen R.K."/>
        </authorList>
    </citation>
    <scope>NUCLEOTIDE SEQUENCE [LARGE SCALE GENOMIC DNA]</scope>
    <source>
        <strain>cv. PT29</strain>
    </source>
</reference>
<organism>
    <name type="scientific">Solanum bulbocastanum</name>
    <name type="common">Wild potato</name>
    <dbReference type="NCBI Taxonomy" id="147425"/>
    <lineage>
        <taxon>Eukaryota</taxon>
        <taxon>Viridiplantae</taxon>
        <taxon>Streptophyta</taxon>
        <taxon>Embryophyta</taxon>
        <taxon>Tracheophyta</taxon>
        <taxon>Spermatophyta</taxon>
        <taxon>Magnoliopsida</taxon>
        <taxon>eudicotyledons</taxon>
        <taxon>Gunneridae</taxon>
        <taxon>Pentapetalae</taxon>
        <taxon>asterids</taxon>
        <taxon>lamiids</taxon>
        <taxon>Solanales</taxon>
        <taxon>Solanaceae</taxon>
        <taxon>Solanoideae</taxon>
        <taxon>Solaneae</taxon>
        <taxon>Solanum</taxon>
    </lineage>
</organism>
<keyword id="KW-0150">Chloroplast</keyword>
<keyword id="KW-0472">Membrane</keyword>
<keyword id="KW-0602">Photosynthesis</keyword>
<keyword id="KW-0604">Photosystem II</keyword>
<keyword id="KW-0934">Plastid</keyword>
<keyword id="KW-0793">Thylakoid</keyword>
<keyword id="KW-0812">Transmembrane</keyword>
<keyword id="KW-1133">Transmembrane helix</keyword>
<proteinExistence type="inferred from homology"/>
<name>PSBT_SOLBU</name>
<evidence type="ECO:0000255" key="1">
    <source>
        <dbReference type="HAMAP-Rule" id="MF_00808"/>
    </source>
</evidence>
<comment type="function">
    <text evidence="1">Found at the monomer-monomer interface of the photosystem II (PS II) dimer, plays a role in assembly and dimerization of PSII. PSII is a light-driven water plastoquinone oxidoreductase, using light energy to abstract electrons from H(2)O, generating a proton gradient subsequently used for ATP formation.</text>
</comment>
<comment type="subunit">
    <text evidence="1">PSII is composed of 1 copy each of membrane proteins PsbA, PsbB, PsbC, PsbD, PsbE, PsbF, PsbH, PsbI, PsbJ, PsbK, PsbL, PsbM, PsbT, PsbY, PsbZ, Psb30/Ycf12, at least 3 peripheral proteins of the oxygen-evolving complex and a large number of cofactors. It forms dimeric complexes.</text>
</comment>
<comment type="subcellular location">
    <subcellularLocation>
        <location evidence="1">Plastid</location>
        <location evidence="1">Chloroplast thylakoid membrane</location>
        <topology evidence="1">Single-pass membrane protein</topology>
    </subcellularLocation>
</comment>
<comment type="similarity">
    <text evidence="1">Belongs to the PsbT family.</text>
</comment>
<dbReference type="EMBL" id="DQ347958">
    <property type="protein sequence ID" value="ABC56239.1"/>
    <property type="molecule type" value="Genomic_DNA"/>
</dbReference>
<dbReference type="RefSeq" id="YP_538876.1">
    <property type="nucleotide sequence ID" value="NC_007943.1"/>
</dbReference>
<dbReference type="SMR" id="Q2MIG1"/>
<dbReference type="GeneID" id="3989519"/>
<dbReference type="GO" id="GO:0009535">
    <property type="term" value="C:chloroplast thylakoid membrane"/>
    <property type="evidence" value="ECO:0007669"/>
    <property type="project" value="UniProtKB-SubCell"/>
</dbReference>
<dbReference type="GO" id="GO:0009539">
    <property type="term" value="C:photosystem II reaction center"/>
    <property type="evidence" value="ECO:0007669"/>
    <property type="project" value="InterPro"/>
</dbReference>
<dbReference type="GO" id="GO:0015979">
    <property type="term" value="P:photosynthesis"/>
    <property type="evidence" value="ECO:0007669"/>
    <property type="project" value="UniProtKB-UniRule"/>
</dbReference>
<dbReference type="HAMAP" id="MF_00808">
    <property type="entry name" value="PSII_PsbT"/>
    <property type="match status" value="1"/>
</dbReference>
<dbReference type="InterPro" id="IPR001743">
    <property type="entry name" value="PSII_PsbT"/>
</dbReference>
<dbReference type="InterPro" id="IPR037268">
    <property type="entry name" value="PSII_PsbT_sf"/>
</dbReference>
<dbReference type="PANTHER" id="PTHR36411">
    <property type="match status" value="1"/>
</dbReference>
<dbReference type="PANTHER" id="PTHR36411:SF2">
    <property type="entry name" value="PHOTOSYSTEM II REACTION CENTER PROTEIN T"/>
    <property type="match status" value="1"/>
</dbReference>
<dbReference type="Pfam" id="PF01405">
    <property type="entry name" value="PsbT"/>
    <property type="match status" value="1"/>
</dbReference>
<dbReference type="SUPFAM" id="SSF161029">
    <property type="entry name" value="Photosystem II reaction center protein T, PsbT"/>
    <property type="match status" value="1"/>
</dbReference>
<accession>Q2MIG1</accession>
<sequence length="34" mass="3932">MEALVYTFLLVSTLGIIFFAIFFREPPKVPTKKN</sequence>
<geneLocation type="chloroplast"/>
<gene>
    <name evidence="1" type="primary">psbT</name>
</gene>